<reference key="1">
    <citation type="submission" date="2008-06" db="EMBL/GenBank/DDBJ databases">
        <title>Complete sequence of Chloroherpeton thalassium ATCC 35110.</title>
        <authorList>
            <consortium name="US DOE Joint Genome Institute"/>
            <person name="Lucas S."/>
            <person name="Copeland A."/>
            <person name="Lapidus A."/>
            <person name="Glavina del Rio T."/>
            <person name="Dalin E."/>
            <person name="Tice H."/>
            <person name="Bruce D."/>
            <person name="Goodwin L."/>
            <person name="Pitluck S."/>
            <person name="Schmutz J."/>
            <person name="Larimer F."/>
            <person name="Land M."/>
            <person name="Hauser L."/>
            <person name="Kyrpides N."/>
            <person name="Mikhailova N."/>
            <person name="Liu Z."/>
            <person name="Li T."/>
            <person name="Zhao F."/>
            <person name="Overmann J."/>
            <person name="Bryant D.A."/>
            <person name="Richardson P."/>
        </authorList>
    </citation>
    <scope>NUCLEOTIDE SEQUENCE [LARGE SCALE GENOMIC DNA]</scope>
    <source>
        <strain>ATCC 35110 / GB-78</strain>
    </source>
</reference>
<evidence type="ECO:0000255" key="1">
    <source>
        <dbReference type="HAMAP-Rule" id="MF_00181"/>
    </source>
</evidence>
<sequence length="509" mass="53972">MKVSVTKNTIQSLKLDAVAFPISKSEKDNALKEVAAKTGVTVALFEKDFSADESSLMMLYPDLELCAFKRVFLVGLGDKPGLDACRSAMASLAKKVKELKLATVGVDLSGAKALSETANDSVDYIAQTAVEGFHSGLYDFNQLKTNRVKELKSGKSEDDEPKQAVEELVLATDAKILSDVKKGAETGDIIATSQAMVRDLVNSPSNYMTALDFAERVKASGEKHGFKVTVFDKAKIEELKMGGLLGVNKGSVIPPTFSIMEYKPEGESLGRVALVGKGVMFDTGGISIKPSSGMGDMKADMAGGADVLGAVEAAARLKLPLEVIGIVPATDNMPSGSAQNPGDVLTTYSGITVEVDNTDAEGRLILADALTYVKETYNPDTIIDLATLTGACIVALGETTAGLFSNNDELAEKLYKAGQRAGEKVWRMPIWDEYDKLIKSNVADVKNVGGRSAGSITAAKFLEKFVGDHSSWAHLDIAGPAFPGMTNGGGSGSTGFGVRLLVELMRNWK</sequence>
<gene>
    <name evidence="1" type="primary">pepA</name>
    <name type="ordered locus">Ctha_2096</name>
</gene>
<proteinExistence type="inferred from homology"/>
<keyword id="KW-0031">Aminopeptidase</keyword>
<keyword id="KW-0963">Cytoplasm</keyword>
<keyword id="KW-0378">Hydrolase</keyword>
<keyword id="KW-0464">Manganese</keyword>
<keyword id="KW-0479">Metal-binding</keyword>
<keyword id="KW-0645">Protease</keyword>
<keyword id="KW-1185">Reference proteome</keyword>
<organism>
    <name type="scientific">Chloroherpeton thalassium (strain ATCC 35110 / GB-78)</name>
    <dbReference type="NCBI Taxonomy" id="517418"/>
    <lineage>
        <taxon>Bacteria</taxon>
        <taxon>Pseudomonadati</taxon>
        <taxon>Chlorobiota</taxon>
        <taxon>Chlorobiia</taxon>
        <taxon>Chlorobiales</taxon>
        <taxon>Chloroherpetonaceae</taxon>
        <taxon>Chloroherpeton</taxon>
    </lineage>
</organism>
<protein>
    <recommendedName>
        <fullName evidence="1">Probable cytosol aminopeptidase</fullName>
        <ecNumber evidence="1">3.4.11.1</ecNumber>
    </recommendedName>
    <alternativeName>
        <fullName evidence="1">Leucine aminopeptidase</fullName>
        <shortName evidence="1">LAP</shortName>
        <ecNumber evidence="1">3.4.11.10</ecNumber>
    </alternativeName>
    <alternativeName>
        <fullName evidence="1">Leucyl aminopeptidase</fullName>
    </alternativeName>
</protein>
<accession>B3QVE8</accession>
<feature type="chain" id="PRO_1000098316" description="Probable cytosol aminopeptidase">
    <location>
        <begin position="1"/>
        <end position="509"/>
    </location>
</feature>
<feature type="active site" evidence="1">
    <location>
        <position position="289"/>
    </location>
</feature>
<feature type="active site" evidence="1">
    <location>
        <position position="363"/>
    </location>
</feature>
<feature type="binding site" evidence="1">
    <location>
        <position position="277"/>
    </location>
    <ligand>
        <name>Mn(2+)</name>
        <dbReference type="ChEBI" id="CHEBI:29035"/>
        <label>2</label>
    </ligand>
</feature>
<feature type="binding site" evidence="1">
    <location>
        <position position="282"/>
    </location>
    <ligand>
        <name>Mn(2+)</name>
        <dbReference type="ChEBI" id="CHEBI:29035"/>
        <label>1</label>
    </ligand>
</feature>
<feature type="binding site" evidence="1">
    <location>
        <position position="282"/>
    </location>
    <ligand>
        <name>Mn(2+)</name>
        <dbReference type="ChEBI" id="CHEBI:29035"/>
        <label>2</label>
    </ligand>
</feature>
<feature type="binding site" evidence="1">
    <location>
        <position position="300"/>
    </location>
    <ligand>
        <name>Mn(2+)</name>
        <dbReference type="ChEBI" id="CHEBI:29035"/>
        <label>2</label>
    </ligand>
</feature>
<feature type="binding site" evidence="1">
    <location>
        <position position="359"/>
    </location>
    <ligand>
        <name>Mn(2+)</name>
        <dbReference type="ChEBI" id="CHEBI:29035"/>
        <label>1</label>
    </ligand>
</feature>
<feature type="binding site" evidence="1">
    <location>
        <position position="361"/>
    </location>
    <ligand>
        <name>Mn(2+)</name>
        <dbReference type="ChEBI" id="CHEBI:29035"/>
        <label>1</label>
    </ligand>
</feature>
<feature type="binding site" evidence="1">
    <location>
        <position position="361"/>
    </location>
    <ligand>
        <name>Mn(2+)</name>
        <dbReference type="ChEBI" id="CHEBI:29035"/>
        <label>2</label>
    </ligand>
</feature>
<dbReference type="EC" id="3.4.11.1" evidence="1"/>
<dbReference type="EC" id="3.4.11.10" evidence="1"/>
<dbReference type="EMBL" id="CP001100">
    <property type="protein sequence ID" value="ACF14548.1"/>
    <property type="molecule type" value="Genomic_DNA"/>
</dbReference>
<dbReference type="RefSeq" id="WP_012500631.1">
    <property type="nucleotide sequence ID" value="NC_011026.1"/>
</dbReference>
<dbReference type="SMR" id="B3QVE8"/>
<dbReference type="STRING" id="517418.Ctha_2096"/>
<dbReference type="KEGG" id="cts:Ctha_2096"/>
<dbReference type="eggNOG" id="COG0260">
    <property type="taxonomic scope" value="Bacteria"/>
</dbReference>
<dbReference type="HOGENOM" id="CLU_013734_2_2_10"/>
<dbReference type="OrthoDB" id="9809354at2"/>
<dbReference type="Proteomes" id="UP000001208">
    <property type="component" value="Chromosome"/>
</dbReference>
<dbReference type="GO" id="GO:0005737">
    <property type="term" value="C:cytoplasm"/>
    <property type="evidence" value="ECO:0007669"/>
    <property type="project" value="UniProtKB-SubCell"/>
</dbReference>
<dbReference type="GO" id="GO:0030145">
    <property type="term" value="F:manganese ion binding"/>
    <property type="evidence" value="ECO:0007669"/>
    <property type="project" value="UniProtKB-UniRule"/>
</dbReference>
<dbReference type="GO" id="GO:0070006">
    <property type="term" value="F:metalloaminopeptidase activity"/>
    <property type="evidence" value="ECO:0007669"/>
    <property type="project" value="InterPro"/>
</dbReference>
<dbReference type="GO" id="GO:0006508">
    <property type="term" value="P:proteolysis"/>
    <property type="evidence" value="ECO:0007669"/>
    <property type="project" value="UniProtKB-KW"/>
</dbReference>
<dbReference type="CDD" id="cd00433">
    <property type="entry name" value="Peptidase_M17"/>
    <property type="match status" value="1"/>
</dbReference>
<dbReference type="Gene3D" id="3.40.220.10">
    <property type="entry name" value="Leucine Aminopeptidase, subunit E, domain 1"/>
    <property type="match status" value="1"/>
</dbReference>
<dbReference type="Gene3D" id="3.40.630.10">
    <property type="entry name" value="Zn peptidases"/>
    <property type="match status" value="1"/>
</dbReference>
<dbReference type="HAMAP" id="MF_00181">
    <property type="entry name" value="Cytosol_peptidase_M17"/>
    <property type="match status" value="1"/>
</dbReference>
<dbReference type="InterPro" id="IPR011356">
    <property type="entry name" value="Leucine_aapep/pepB"/>
</dbReference>
<dbReference type="InterPro" id="IPR043472">
    <property type="entry name" value="Macro_dom-like"/>
</dbReference>
<dbReference type="InterPro" id="IPR000819">
    <property type="entry name" value="Peptidase_M17_C"/>
</dbReference>
<dbReference type="InterPro" id="IPR023042">
    <property type="entry name" value="Peptidase_M17_leu_NH2_pept"/>
</dbReference>
<dbReference type="InterPro" id="IPR008283">
    <property type="entry name" value="Peptidase_M17_N"/>
</dbReference>
<dbReference type="NCBIfam" id="NF002073">
    <property type="entry name" value="PRK00913.1-2"/>
    <property type="match status" value="1"/>
</dbReference>
<dbReference type="NCBIfam" id="NF002074">
    <property type="entry name" value="PRK00913.1-4"/>
    <property type="match status" value="1"/>
</dbReference>
<dbReference type="NCBIfam" id="NF002082">
    <property type="entry name" value="PRK00913.3-4"/>
    <property type="match status" value="1"/>
</dbReference>
<dbReference type="NCBIfam" id="NF002083">
    <property type="entry name" value="PRK00913.3-5"/>
    <property type="match status" value="1"/>
</dbReference>
<dbReference type="PANTHER" id="PTHR11963:SF23">
    <property type="entry name" value="CYTOSOL AMINOPEPTIDASE"/>
    <property type="match status" value="1"/>
</dbReference>
<dbReference type="PANTHER" id="PTHR11963">
    <property type="entry name" value="LEUCINE AMINOPEPTIDASE-RELATED"/>
    <property type="match status" value="1"/>
</dbReference>
<dbReference type="Pfam" id="PF00883">
    <property type="entry name" value="Peptidase_M17"/>
    <property type="match status" value="1"/>
</dbReference>
<dbReference type="Pfam" id="PF02789">
    <property type="entry name" value="Peptidase_M17_N"/>
    <property type="match status" value="1"/>
</dbReference>
<dbReference type="PRINTS" id="PR00481">
    <property type="entry name" value="LAMNOPPTDASE"/>
</dbReference>
<dbReference type="SUPFAM" id="SSF52949">
    <property type="entry name" value="Macro domain-like"/>
    <property type="match status" value="1"/>
</dbReference>
<dbReference type="SUPFAM" id="SSF53187">
    <property type="entry name" value="Zn-dependent exopeptidases"/>
    <property type="match status" value="1"/>
</dbReference>
<dbReference type="PROSITE" id="PS00631">
    <property type="entry name" value="CYTOSOL_AP"/>
    <property type="match status" value="1"/>
</dbReference>
<comment type="function">
    <text evidence="1">Presumably involved in the processing and regular turnover of intracellular proteins. Catalyzes the removal of unsubstituted N-terminal amino acids from various peptides.</text>
</comment>
<comment type="catalytic activity">
    <reaction evidence="1">
        <text>Release of an N-terminal amino acid, Xaa-|-Yaa-, in which Xaa is preferably Leu, but may be other amino acids including Pro although not Arg or Lys, and Yaa may be Pro. Amino acid amides and methyl esters are also readily hydrolyzed, but rates on arylamides are exceedingly low.</text>
        <dbReference type="EC" id="3.4.11.1"/>
    </reaction>
</comment>
<comment type="catalytic activity">
    <reaction evidence="1">
        <text>Release of an N-terminal amino acid, preferentially leucine, but not glutamic or aspartic acids.</text>
        <dbReference type="EC" id="3.4.11.10"/>
    </reaction>
</comment>
<comment type="cofactor">
    <cofactor evidence="1">
        <name>Mn(2+)</name>
        <dbReference type="ChEBI" id="CHEBI:29035"/>
    </cofactor>
    <text evidence="1">Binds 2 manganese ions per subunit.</text>
</comment>
<comment type="subcellular location">
    <subcellularLocation>
        <location evidence="1">Cytoplasm</location>
    </subcellularLocation>
</comment>
<comment type="similarity">
    <text evidence="1">Belongs to the peptidase M17 family.</text>
</comment>
<name>AMPA_CHLT3</name>